<dbReference type="EC" id="6.2.1.30"/>
<dbReference type="EMBL" id="AE017221">
    <property type="protein sequence ID" value="AAS80950.1"/>
    <property type="molecule type" value="Genomic_DNA"/>
</dbReference>
<dbReference type="SMR" id="Q72K16"/>
<dbReference type="KEGG" id="tth:TT_C0602"/>
<dbReference type="eggNOG" id="COG1541">
    <property type="taxonomic scope" value="Bacteria"/>
</dbReference>
<dbReference type="HOGENOM" id="CLU_035301_1_1_0"/>
<dbReference type="BRENDA" id="6.2.1.30">
    <property type="organism ID" value="2305"/>
</dbReference>
<dbReference type="UniPathway" id="UPA00930"/>
<dbReference type="Proteomes" id="UP000000592">
    <property type="component" value="Chromosome"/>
</dbReference>
<dbReference type="GO" id="GO:0005524">
    <property type="term" value="F:ATP binding"/>
    <property type="evidence" value="ECO:0000314"/>
    <property type="project" value="UniProtKB"/>
</dbReference>
<dbReference type="GO" id="GO:0047475">
    <property type="term" value="F:phenylacetate-CoA ligase activity"/>
    <property type="evidence" value="ECO:0000314"/>
    <property type="project" value="UniProtKB"/>
</dbReference>
<dbReference type="GO" id="GO:0010124">
    <property type="term" value="P:phenylacetate catabolic process"/>
    <property type="evidence" value="ECO:0000314"/>
    <property type="project" value="UniProtKB"/>
</dbReference>
<dbReference type="CDD" id="cd05913">
    <property type="entry name" value="PaaK"/>
    <property type="match status" value="1"/>
</dbReference>
<dbReference type="FunFam" id="3.40.50.12780:FF:000016">
    <property type="entry name" value="Phenylacetate-coenzyme A ligase"/>
    <property type="match status" value="1"/>
</dbReference>
<dbReference type="Gene3D" id="3.30.300.30">
    <property type="match status" value="1"/>
</dbReference>
<dbReference type="Gene3D" id="3.40.50.12780">
    <property type="entry name" value="N-terminal domain of ligase-like"/>
    <property type="match status" value="1"/>
</dbReference>
<dbReference type="InterPro" id="IPR045851">
    <property type="entry name" value="AMP-bd_C_sf"/>
</dbReference>
<dbReference type="InterPro" id="IPR028154">
    <property type="entry name" value="AMP-dep_Lig_C"/>
</dbReference>
<dbReference type="InterPro" id="IPR000873">
    <property type="entry name" value="AMP-dep_synth/lig_dom"/>
</dbReference>
<dbReference type="InterPro" id="IPR042099">
    <property type="entry name" value="ANL_N_sf"/>
</dbReference>
<dbReference type="InterPro" id="IPR011880">
    <property type="entry name" value="PA_CoA_ligase"/>
</dbReference>
<dbReference type="PANTHER" id="PTHR43845">
    <property type="entry name" value="BLR5969 PROTEIN"/>
    <property type="match status" value="1"/>
</dbReference>
<dbReference type="PANTHER" id="PTHR43845:SF1">
    <property type="entry name" value="BLR5969 PROTEIN"/>
    <property type="match status" value="1"/>
</dbReference>
<dbReference type="Pfam" id="PF00501">
    <property type="entry name" value="AMP-binding"/>
    <property type="match status" value="1"/>
</dbReference>
<dbReference type="Pfam" id="PF14535">
    <property type="entry name" value="AMP-binding_C_2"/>
    <property type="match status" value="1"/>
</dbReference>
<dbReference type="PIRSF" id="PIRSF006444">
    <property type="entry name" value="PaaK"/>
    <property type="match status" value="1"/>
</dbReference>
<dbReference type="SUPFAM" id="SSF56801">
    <property type="entry name" value="Acetyl-CoA synthetase-like"/>
    <property type="match status" value="1"/>
</dbReference>
<reference key="1">
    <citation type="journal article" date="2004" name="Nat. Biotechnol.">
        <title>The genome sequence of the extreme thermophile Thermus thermophilus.</title>
        <authorList>
            <person name="Henne A."/>
            <person name="Brueggemann H."/>
            <person name="Raasch C."/>
            <person name="Wiezer A."/>
            <person name="Hartsch T."/>
            <person name="Liesegang H."/>
            <person name="Johann A."/>
            <person name="Lienard T."/>
            <person name="Gohl O."/>
            <person name="Martinez-Arias R."/>
            <person name="Jacobi C."/>
            <person name="Starkuviene V."/>
            <person name="Schlenczeck S."/>
            <person name="Dencker S."/>
            <person name="Huber R."/>
            <person name="Klenk H.-P."/>
            <person name="Kramer W."/>
            <person name="Merkl R."/>
            <person name="Gottschalk G."/>
            <person name="Fritz H.-J."/>
        </authorList>
    </citation>
    <scope>NUCLEOTIDE SEQUENCE [LARGE SCALE GENOMIC DNA]</scope>
    <source>
        <strain>ATCC BAA-163 / DSM 7039 / HB27</strain>
    </source>
</reference>
<reference key="2">
    <citation type="journal article" date="2008" name="Curr. Microbiol.">
        <title>Phenylacetate metabolism in thermophiles: characterization of phenylacetate-CoA ligase, the initial enzyme of the hybrid pathway in Thermus thermophilus.</title>
        <authorList>
            <person name="Erb T.J."/>
            <person name="Ismail W."/>
            <person name="Fuchs G."/>
        </authorList>
    </citation>
    <scope>FUNCTION AS A LIGASE AND IN PHENYLACETATE CATABOLISM</scope>
    <scope>BIOPHYSICOCHEMICAL PROPERTIES</scope>
    <scope>CATALYTIC ACTIVITY</scope>
</reference>
<feature type="chain" id="PRO_0000416774" description="Phenylacetate-coenzyme A ligase">
    <location>
        <begin position="1"/>
        <end position="445"/>
    </location>
</feature>
<protein>
    <recommendedName>
        <fullName>Phenylacetate-coenzyme A ligase</fullName>
        <ecNumber>6.2.1.30</ecNumber>
    </recommendedName>
    <alternativeName>
        <fullName>Phenylacetyl-CoA ligase</fullName>
        <shortName>PA-CoA ligase</shortName>
    </alternativeName>
</protein>
<proteinExistence type="evidence at protein level"/>
<name>PAAK_THET2</name>
<sequence length="445" mass="49599">MMYQPELETLPREKLRALQEERLKRLVAYVYERVPFYRRLLDEAGVDPKGFRGLEDLPRIPFTKKTDLRDHYPFGLFAVPREEVARVHASSGTTGKPTVVGYTKNDLKVFAEVVARSLAAAGARPGMMLHNAYGYGLFTGGLGLHGGAEALGMTVVPVSGGMTERQVMLIQDFRPEVISCTPSYAQTLAEEFRKRGVSPEELSLEYAVLGAEPWTEAIRKQVDEGLGVKSTNIYGLSEIIGPGVSNECVEERQGSHIWEDHFLPEVVDPDTGEPLPEGKVGVLVFTTLTKEAMPLLRYWTGDLTFLTYEACTCGRTHVRMGPILGRTDDMLIIRGVNVYPTQVEAVLLAIPEVVPHYQIVVRREGTLDEAELKVEVSEPFFREIGQEVLSDEVVEADHRLHALRERIARKIKDNVGVTLKVTLLPPGQAPRSEGGKLRRVLDLRK</sequence>
<gene>
    <name type="ordered locus">TT_C0602</name>
</gene>
<accession>Q72K16</accession>
<keyword id="KW-0067">ATP-binding</keyword>
<keyword id="KW-0436">Ligase</keyword>
<keyword id="KW-0547">Nucleotide-binding</keyword>
<evidence type="ECO:0000250" key="1"/>
<evidence type="ECO:0000269" key="2">
    <source>
    </source>
</evidence>
<evidence type="ECO:0000305" key="3"/>
<comment type="function">
    <text evidence="2">Catalyzes the activation of phenylacetic acid (PA) to phenylacetyl-CoA (PA-CoA). Involved in the phenylalanine metabolism.</text>
</comment>
<comment type="catalytic activity">
    <reaction evidence="2">
        <text>2-phenylacetate + ATP + CoA = phenylacetyl-CoA + AMP + diphosphate</text>
        <dbReference type="Rhea" id="RHEA:20956"/>
        <dbReference type="ChEBI" id="CHEBI:18401"/>
        <dbReference type="ChEBI" id="CHEBI:30616"/>
        <dbReference type="ChEBI" id="CHEBI:33019"/>
        <dbReference type="ChEBI" id="CHEBI:57287"/>
        <dbReference type="ChEBI" id="CHEBI:57390"/>
        <dbReference type="ChEBI" id="CHEBI:456215"/>
        <dbReference type="EC" id="6.2.1.30"/>
    </reaction>
</comment>
<comment type="biophysicochemical properties">
    <kinetics>
        <KM evidence="2">6 uM for ATP (at 50 degrees Celsius and pH 7.5)</KM>
        <KM evidence="2">30 uM for CoA (at 50 degrees Celsius and pH 7.5)</KM>
        <KM evidence="2">50 uM for PA (at 50 degrees Celsius and pH 7.5)</KM>
    </kinetics>
    <temperatureDependence>
        <text evidence="2">Optimum temperature is 75 degrees Celsius. The enzyme is heat stable.</text>
    </temperatureDependence>
</comment>
<comment type="pathway">
    <text>Aromatic compound metabolism; phenylacetate degradation.</text>
</comment>
<comment type="subunit">
    <text evidence="1">Monomer.</text>
</comment>
<comment type="similarity">
    <text evidence="3">Belongs to the phenylacetyl-CoA ligase family.</text>
</comment>
<organism>
    <name type="scientific">Thermus thermophilus (strain ATCC BAA-163 / DSM 7039 / HB27)</name>
    <dbReference type="NCBI Taxonomy" id="262724"/>
    <lineage>
        <taxon>Bacteria</taxon>
        <taxon>Thermotogati</taxon>
        <taxon>Deinococcota</taxon>
        <taxon>Deinococci</taxon>
        <taxon>Thermales</taxon>
        <taxon>Thermaceae</taxon>
        <taxon>Thermus</taxon>
    </lineage>
</organism>